<evidence type="ECO:0000255" key="1">
    <source>
        <dbReference type="HAMAP-Rule" id="MF_01007"/>
    </source>
</evidence>
<evidence type="ECO:0000256" key="2">
    <source>
        <dbReference type="SAM" id="MobiDB-lite"/>
    </source>
</evidence>
<evidence type="ECO:0000305" key="3"/>
<name>RSMH_PSYCK</name>
<sequence>MQEPSEDQATSDELSFVHDAVLLQEAVAAVLGVKALPKQTDDESQNSLQASGIYVDATFGRGGHSRLLLSQLADDATLIVFDKDPTAISVARELANSDSRVKVVHDSFATLTDSLAAMRITQVDGLMADLGISSPQIDDGSRGFSFMRDGAVDMRMDTSRGQSVAEWLETVDDETLANVLYEFGEERHSRRIARAIKQMDSYDSTLALAEVIKVAHPNWQRGKHPATQSFQAMRIFINNELGDVDNFLEQSIPILKVGGQLAVISFHSLEDRRIKQFLQRHSKGQYPEDENLPMPPKRPRYFSKPKRVGPSKAEISHNPRSRSAWLRMATRTDADYVADIHP</sequence>
<protein>
    <recommendedName>
        <fullName evidence="1">Ribosomal RNA small subunit methyltransferase H</fullName>
        <ecNumber evidence="1">2.1.1.199</ecNumber>
    </recommendedName>
    <alternativeName>
        <fullName evidence="1">16S rRNA m(4)C1402 methyltransferase</fullName>
    </alternativeName>
    <alternativeName>
        <fullName evidence="1">rRNA (cytosine-N(4)-)-methyltransferase RsmH</fullName>
    </alternativeName>
</protein>
<reference key="1">
    <citation type="submission" date="2006-03" db="EMBL/GenBank/DDBJ databases">
        <title>Complete sequence of chromosome of Psychrobacter cryohalolentis K5.</title>
        <authorList>
            <consortium name="US DOE Joint Genome Institute"/>
            <person name="Copeland A."/>
            <person name="Lucas S."/>
            <person name="Lapidus A."/>
            <person name="Barry K."/>
            <person name="Detter J.C."/>
            <person name="Glavina T."/>
            <person name="Hammon N."/>
            <person name="Israni S."/>
            <person name="Dalin E."/>
            <person name="Tice H."/>
            <person name="Pitluck S."/>
            <person name="Brettin T."/>
            <person name="Bruce D."/>
            <person name="Han C."/>
            <person name="Tapia R."/>
            <person name="Sims D.R."/>
            <person name="Gilna P."/>
            <person name="Schmutz J."/>
            <person name="Larimer F."/>
            <person name="Land M."/>
            <person name="Hauser L."/>
            <person name="Kyrpides N."/>
            <person name="Kim E."/>
            <person name="Richardson P."/>
        </authorList>
    </citation>
    <scope>NUCLEOTIDE SEQUENCE [LARGE SCALE GENOMIC DNA]</scope>
    <source>
        <strain>ATCC BAA-1226 / DSM 17306 / VKM B-2378 / K5</strain>
    </source>
</reference>
<keyword id="KW-0963">Cytoplasm</keyword>
<keyword id="KW-0489">Methyltransferase</keyword>
<keyword id="KW-0698">rRNA processing</keyword>
<keyword id="KW-0949">S-adenosyl-L-methionine</keyword>
<keyword id="KW-0808">Transferase</keyword>
<feature type="chain" id="PRO_0000387059" description="Ribosomal RNA small subunit methyltransferase H">
    <location>
        <begin position="1"/>
        <end position="342"/>
    </location>
</feature>
<feature type="region of interest" description="Disordered" evidence="2">
    <location>
        <begin position="280"/>
        <end position="319"/>
    </location>
</feature>
<feature type="compositionally biased region" description="Basic residues" evidence="2">
    <location>
        <begin position="297"/>
        <end position="309"/>
    </location>
</feature>
<feature type="binding site" evidence="1">
    <location>
        <begin position="62"/>
        <end position="64"/>
    </location>
    <ligand>
        <name>S-adenosyl-L-methionine</name>
        <dbReference type="ChEBI" id="CHEBI:59789"/>
    </ligand>
</feature>
<feature type="binding site" evidence="1">
    <location>
        <position position="82"/>
    </location>
    <ligand>
        <name>S-adenosyl-L-methionine</name>
        <dbReference type="ChEBI" id="CHEBI:59789"/>
    </ligand>
</feature>
<feature type="binding site" evidence="1">
    <location>
        <position position="108"/>
    </location>
    <ligand>
        <name>S-adenosyl-L-methionine</name>
        <dbReference type="ChEBI" id="CHEBI:59789"/>
    </ligand>
</feature>
<feature type="binding site" evidence="1">
    <location>
        <position position="129"/>
    </location>
    <ligand>
        <name>S-adenosyl-L-methionine</name>
        <dbReference type="ChEBI" id="CHEBI:59789"/>
    </ligand>
</feature>
<feature type="binding site" evidence="1">
    <location>
        <position position="136"/>
    </location>
    <ligand>
        <name>S-adenosyl-L-methionine</name>
        <dbReference type="ChEBI" id="CHEBI:59789"/>
    </ligand>
</feature>
<organism>
    <name type="scientific">Psychrobacter cryohalolentis (strain ATCC BAA-1226 / DSM 17306 / VKM B-2378 / K5)</name>
    <dbReference type="NCBI Taxonomy" id="335284"/>
    <lineage>
        <taxon>Bacteria</taxon>
        <taxon>Pseudomonadati</taxon>
        <taxon>Pseudomonadota</taxon>
        <taxon>Gammaproteobacteria</taxon>
        <taxon>Moraxellales</taxon>
        <taxon>Moraxellaceae</taxon>
        <taxon>Psychrobacter</taxon>
    </lineage>
</organism>
<dbReference type="EC" id="2.1.1.199" evidence="1"/>
<dbReference type="EMBL" id="CP000323">
    <property type="protein sequence ID" value="ABE76157.1"/>
    <property type="status" value="ALT_INIT"/>
    <property type="molecule type" value="Genomic_DNA"/>
</dbReference>
<dbReference type="RefSeq" id="WP_083759475.1">
    <property type="nucleotide sequence ID" value="NC_007969.1"/>
</dbReference>
<dbReference type="SMR" id="Q1Q846"/>
<dbReference type="STRING" id="335284.Pcryo_2380"/>
<dbReference type="KEGG" id="pcr:Pcryo_2380"/>
<dbReference type="eggNOG" id="COG0275">
    <property type="taxonomic scope" value="Bacteria"/>
</dbReference>
<dbReference type="HOGENOM" id="CLU_038422_2_0_6"/>
<dbReference type="Proteomes" id="UP000002425">
    <property type="component" value="Chromosome"/>
</dbReference>
<dbReference type="GO" id="GO:0005737">
    <property type="term" value="C:cytoplasm"/>
    <property type="evidence" value="ECO:0007669"/>
    <property type="project" value="UniProtKB-SubCell"/>
</dbReference>
<dbReference type="GO" id="GO:0071424">
    <property type="term" value="F:rRNA (cytosine-N4-)-methyltransferase activity"/>
    <property type="evidence" value="ECO:0007669"/>
    <property type="project" value="UniProtKB-UniRule"/>
</dbReference>
<dbReference type="GO" id="GO:0070475">
    <property type="term" value="P:rRNA base methylation"/>
    <property type="evidence" value="ECO:0007669"/>
    <property type="project" value="UniProtKB-UniRule"/>
</dbReference>
<dbReference type="Gene3D" id="1.10.150.170">
    <property type="entry name" value="Putative methyltransferase TM0872, insert domain"/>
    <property type="match status" value="1"/>
</dbReference>
<dbReference type="Gene3D" id="3.40.50.150">
    <property type="entry name" value="Vaccinia Virus protein VP39"/>
    <property type="match status" value="1"/>
</dbReference>
<dbReference type="HAMAP" id="MF_01007">
    <property type="entry name" value="16SrRNA_methyltr_H"/>
    <property type="match status" value="1"/>
</dbReference>
<dbReference type="InterPro" id="IPR002903">
    <property type="entry name" value="RsmH"/>
</dbReference>
<dbReference type="InterPro" id="IPR023397">
    <property type="entry name" value="SAM-dep_MeTrfase_MraW_recog"/>
</dbReference>
<dbReference type="InterPro" id="IPR029063">
    <property type="entry name" value="SAM-dependent_MTases_sf"/>
</dbReference>
<dbReference type="NCBIfam" id="TIGR00006">
    <property type="entry name" value="16S rRNA (cytosine(1402)-N(4))-methyltransferase RsmH"/>
    <property type="match status" value="1"/>
</dbReference>
<dbReference type="PANTHER" id="PTHR11265:SF0">
    <property type="entry name" value="12S RRNA N4-METHYLCYTIDINE METHYLTRANSFERASE"/>
    <property type="match status" value="1"/>
</dbReference>
<dbReference type="PANTHER" id="PTHR11265">
    <property type="entry name" value="S-ADENOSYL-METHYLTRANSFERASE MRAW"/>
    <property type="match status" value="1"/>
</dbReference>
<dbReference type="Pfam" id="PF01795">
    <property type="entry name" value="Methyltransf_5"/>
    <property type="match status" value="1"/>
</dbReference>
<dbReference type="PIRSF" id="PIRSF004486">
    <property type="entry name" value="MraW"/>
    <property type="match status" value="1"/>
</dbReference>
<dbReference type="SUPFAM" id="SSF81799">
    <property type="entry name" value="Putative methyltransferase TM0872, insert domain"/>
    <property type="match status" value="1"/>
</dbReference>
<dbReference type="SUPFAM" id="SSF53335">
    <property type="entry name" value="S-adenosyl-L-methionine-dependent methyltransferases"/>
    <property type="match status" value="1"/>
</dbReference>
<accession>Q1Q846</accession>
<comment type="function">
    <text evidence="1">Specifically methylates the N4 position of cytidine in position 1402 (C1402) of 16S rRNA.</text>
</comment>
<comment type="catalytic activity">
    <reaction evidence="1">
        <text>cytidine(1402) in 16S rRNA + S-adenosyl-L-methionine = N(4)-methylcytidine(1402) in 16S rRNA + S-adenosyl-L-homocysteine + H(+)</text>
        <dbReference type="Rhea" id="RHEA:42928"/>
        <dbReference type="Rhea" id="RHEA-COMP:10286"/>
        <dbReference type="Rhea" id="RHEA-COMP:10287"/>
        <dbReference type="ChEBI" id="CHEBI:15378"/>
        <dbReference type="ChEBI" id="CHEBI:57856"/>
        <dbReference type="ChEBI" id="CHEBI:59789"/>
        <dbReference type="ChEBI" id="CHEBI:74506"/>
        <dbReference type="ChEBI" id="CHEBI:82748"/>
        <dbReference type="EC" id="2.1.1.199"/>
    </reaction>
</comment>
<comment type="subcellular location">
    <subcellularLocation>
        <location evidence="1">Cytoplasm</location>
    </subcellularLocation>
</comment>
<comment type="similarity">
    <text evidence="1">Belongs to the methyltransferase superfamily. RsmH family.</text>
</comment>
<comment type="sequence caution" evidence="3">
    <conflict type="erroneous initiation">
        <sequence resource="EMBL-CDS" id="ABE76157"/>
    </conflict>
</comment>
<proteinExistence type="inferred from homology"/>
<gene>
    <name evidence="1" type="primary">rsmH</name>
    <name type="synonym">mraW</name>
    <name type="ordered locus">Pcryo_2380</name>
</gene>